<organism>
    <name type="scientific">Salmonella enteritidis PT4 (strain P125109)</name>
    <dbReference type="NCBI Taxonomy" id="550537"/>
    <lineage>
        <taxon>Bacteria</taxon>
        <taxon>Pseudomonadati</taxon>
        <taxon>Pseudomonadota</taxon>
        <taxon>Gammaproteobacteria</taxon>
        <taxon>Enterobacterales</taxon>
        <taxon>Enterobacteriaceae</taxon>
        <taxon>Salmonella</taxon>
    </lineage>
</organism>
<protein>
    <recommendedName>
        <fullName evidence="1">Regulator of sigma D</fullName>
    </recommendedName>
</protein>
<accession>B5QYF0</accession>
<keyword id="KW-0963">Cytoplasm</keyword>
<keyword id="KW-0804">Transcription</keyword>
<keyword id="KW-0805">Transcription regulation</keyword>
<feature type="chain" id="PRO_1000138199" description="Regulator of sigma D">
    <location>
        <begin position="1"/>
        <end position="162"/>
    </location>
</feature>
<sequence>MLNQLENLTERVGGSNKLVDRWLDVRKHLLVAYYNLVGIKPGKESYMRLNEKALDDFCQSLVDYLSAGHFSIYERILHKLEGNGQLLHAAKIWPLLEDNTQRIMDYYDTSLETAIDHDNCLEFQQALSDIGEALEARFVLEDKLIMLVFDAMHDGARVKRPA</sequence>
<evidence type="ECO:0000255" key="1">
    <source>
        <dbReference type="HAMAP-Rule" id="MF_01181"/>
    </source>
</evidence>
<name>RSD_SALEP</name>
<reference key="1">
    <citation type="journal article" date="2008" name="Genome Res.">
        <title>Comparative genome analysis of Salmonella enteritidis PT4 and Salmonella gallinarum 287/91 provides insights into evolutionary and host adaptation pathways.</title>
        <authorList>
            <person name="Thomson N.R."/>
            <person name="Clayton D.J."/>
            <person name="Windhorst D."/>
            <person name="Vernikos G."/>
            <person name="Davidson S."/>
            <person name="Churcher C."/>
            <person name="Quail M.A."/>
            <person name="Stevens M."/>
            <person name="Jones M.A."/>
            <person name="Watson M."/>
            <person name="Barron A."/>
            <person name="Layton A."/>
            <person name="Pickard D."/>
            <person name="Kingsley R.A."/>
            <person name="Bignell A."/>
            <person name="Clark L."/>
            <person name="Harris B."/>
            <person name="Ormond D."/>
            <person name="Abdellah Z."/>
            <person name="Brooks K."/>
            <person name="Cherevach I."/>
            <person name="Chillingworth T."/>
            <person name="Woodward J."/>
            <person name="Norberczak H."/>
            <person name="Lord A."/>
            <person name="Arrowsmith C."/>
            <person name="Jagels K."/>
            <person name="Moule S."/>
            <person name="Mungall K."/>
            <person name="Saunders M."/>
            <person name="Whitehead S."/>
            <person name="Chabalgoity J.A."/>
            <person name="Maskell D."/>
            <person name="Humphreys T."/>
            <person name="Roberts M."/>
            <person name="Barrow P.A."/>
            <person name="Dougan G."/>
            <person name="Parkhill J."/>
        </authorList>
    </citation>
    <scope>NUCLEOTIDE SEQUENCE [LARGE SCALE GENOMIC DNA]</scope>
    <source>
        <strain>P125109</strain>
    </source>
</reference>
<dbReference type="EMBL" id="AM933172">
    <property type="protein sequence ID" value="CAR35520.1"/>
    <property type="molecule type" value="Genomic_DNA"/>
</dbReference>
<dbReference type="RefSeq" id="WP_000934315.1">
    <property type="nucleotide sequence ID" value="NC_011294.1"/>
</dbReference>
<dbReference type="SMR" id="B5QYF0"/>
<dbReference type="KEGG" id="set:SEN3951"/>
<dbReference type="HOGENOM" id="CLU_142729_0_0_6"/>
<dbReference type="Proteomes" id="UP000000613">
    <property type="component" value="Chromosome"/>
</dbReference>
<dbReference type="GO" id="GO:0005737">
    <property type="term" value="C:cytoplasm"/>
    <property type="evidence" value="ECO:0007669"/>
    <property type="project" value="UniProtKB-SubCell"/>
</dbReference>
<dbReference type="GO" id="GO:0006355">
    <property type="term" value="P:regulation of DNA-templated transcription"/>
    <property type="evidence" value="ECO:0007669"/>
    <property type="project" value="InterPro"/>
</dbReference>
<dbReference type="FunFam" id="1.20.120.1370:FF:000001">
    <property type="entry name" value="Regulator of sigma D"/>
    <property type="match status" value="1"/>
</dbReference>
<dbReference type="Gene3D" id="1.20.120.1370">
    <property type="entry name" value="Regulator of RNA polymerase sigma(70) subunit, domain 4"/>
    <property type="match status" value="1"/>
</dbReference>
<dbReference type="HAMAP" id="MF_01181">
    <property type="entry name" value="Rsd"/>
    <property type="match status" value="1"/>
</dbReference>
<dbReference type="InterPro" id="IPR038309">
    <property type="entry name" value="Rsd/AlgQ_sf"/>
</dbReference>
<dbReference type="InterPro" id="IPR023785">
    <property type="entry name" value="Sigma70_reg_Rsd"/>
</dbReference>
<dbReference type="InterPro" id="IPR007448">
    <property type="entry name" value="Sigma70_reg_Rsd_AlgQ"/>
</dbReference>
<dbReference type="NCBIfam" id="NF008723">
    <property type="entry name" value="PRK11718.1"/>
    <property type="match status" value="1"/>
</dbReference>
<dbReference type="Pfam" id="PF04353">
    <property type="entry name" value="Rsd_AlgQ"/>
    <property type="match status" value="1"/>
</dbReference>
<dbReference type="PIRSF" id="PIRSF016548">
    <property type="entry name" value="Rsd_AlgQ"/>
    <property type="match status" value="1"/>
</dbReference>
<comment type="function">
    <text evidence="1">Binds RpoD and negatively regulates RpoD-mediated transcription activation by preventing the interaction between the primary sigma factor RpoD with the catalytic core of the RNA polymerase and with promoter DNA. May be involved in replacement of the RNA polymerase sigma subunit from RpoD to RpoS during the transition from exponential growth to the stationary phase.</text>
</comment>
<comment type="subunit">
    <text evidence="1">Interacts with RpoD.</text>
</comment>
<comment type="subcellular location">
    <subcellularLocation>
        <location evidence="1">Cytoplasm</location>
    </subcellularLocation>
</comment>
<comment type="similarity">
    <text evidence="1">Belongs to the Rsd/AlgQ family.</text>
</comment>
<gene>
    <name evidence="1" type="primary">rsd</name>
    <name type="ordered locus">SEN3951</name>
</gene>
<proteinExistence type="inferred from homology"/>